<proteinExistence type="inferred from homology"/>
<organism>
    <name type="scientific">Chloroherpeton thalassium (strain ATCC 35110 / GB-78)</name>
    <dbReference type="NCBI Taxonomy" id="517418"/>
    <lineage>
        <taxon>Bacteria</taxon>
        <taxon>Pseudomonadati</taxon>
        <taxon>Chlorobiota</taxon>
        <taxon>Chlorobiia</taxon>
        <taxon>Chlorobiales</taxon>
        <taxon>Chloroherpetonaceae</taxon>
        <taxon>Chloroherpeton</taxon>
    </lineage>
</organism>
<gene>
    <name evidence="1" type="primary">bchB</name>
    <name type="ordered locus">Ctha_1372</name>
</gene>
<dbReference type="EC" id="1.3.7.7" evidence="1"/>
<dbReference type="EMBL" id="CP001100">
    <property type="protein sequence ID" value="ACF13835.1"/>
    <property type="molecule type" value="Genomic_DNA"/>
</dbReference>
<dbReference type="RefSeq" id="WP_012499919.1">
    <property type="nucleotide sequence ID" value="NC_011026.1"/>
</dbReference>
<dbReference type="SMR" id="B3QZE2"/>
<dbReference type="STRING" id="517418.Ctha_1372"/>
<dbReference type="KEGG" id="cts:Ctha_1372"/>
<dbReference type="eggNOG" id="COG2710">
    <property type="taxonomic scope" value="Bacteria"/>
</dbReference>
<dbReference type="HOGENOM" id="CLU_025470_0_0_10"/>
<dbReference type="OrthoDB" id="5717231at2"/>
<dbReference type="UniPathway" id="UPA00671"/>
<dbReference type="Proteomes" id="UP000001208">
    <property type="component" value="Chromosome"/>
</dbReference>
<dbReference type="GO" id="GO:0051539">
    <property type="term" value="F:4 iron, 4 sulfur cluster binding"/>
    <property type="evidence" value="ECO:0007669"/>
    <property type="project" value="UniProtKB-UniRule"/>
</dbReference>
<dbReference type="GO" id="GO:0005524">
    <property type="term" value="F:ATP binding"/>
    <property type="evidence" value="ECO:0007669"/>
    <property type="project" value="UniProtKB-UniRule"/>
</dbReference>
<dbReference type="GO" id="GO:0046872">
    <property type="term" value="F:metal ion binding"/>
    <property type="evidence" value="ECO:0007669"/>
    <property type="project" value="UniProtKB-KW"/>
</dbReference>
<dbReference type="GO" id="GO:0016730">
    <property type="term" value="F:oxidoreductase activity, acting on iron-sulfur proteins as donors"/>
    <property type="evidence" value="ECO:0007669"/>
    <property type="project" value="InterPro"/>
</dbReference>
<dbReference type="GO" id="GO:0016636">
    <property type="term" value="F:oxidoreductase activity, acting on the CH-CH group of donors, iron-sulfur protein as acceptor"/>
    <property type="evidence" value="ECO:0007669"/>
    <property type="project" value="UniProtKB-UniRule"/>
</dbReference>
<dbReference type="GO" id="GO:0036070">
    <property type="term" value="P:light-independent bacteriochlorophyll biosynthetic process"/>
    <property type="evidence" value="ECO:0007669"/>
    <property type="project" value="UniProtKB-UniRule"/>
</dbReference>
<dbReference type="GO" id="GO:0019685">
    <property type="term" value="P:photosynthesis, dark reaction"/>
    <property type="evidence" value="ECO:0007669"/>
    <property type="project" value="InterPro"/>
</dbReference>
<dbReference type="Gene3D" id="1.20.89.20">
    <property type="match status" value="1"/>
</dbReference>
<dbReference type="Gene3D" id="3.40.50.1980">
    <property type="entry name" value="Nitrogenase molybdenum iron protein domain"/>
    <property type="match status" value="3"/>
</dbReference>
<dbReference type="Gene3D" id="1.10.8.550">
    <property type="entry name" value="Proto-chlorophyllide reductase 57 kD subunit B"/>
    <property type="match status" value="1"/>
</dbReference>
<dbReference type="HAMAP" id="MF_00353">
    <property type="entry name" value="ChlB_BchB"/>
    <property type="match status" value="1"/>
</dbReference>
<dbReference type="InterPro" id="IPR050152">
    <property type="entry name" value="ChlB/BchB/BchZ"/>
</dbReference>
<dbReference type="InterPro" id="IPR013580">
    <property type="entry name" value="LI-POR_suB-like_C"/>
</dbReference>
<dbReference type="InterPro" id="IPR000510">
    <property type="entry name" value="Nase/OxRdtase_comp1"/>
</dbReference>
<dbReference type="InterPro" id="IPR042298">
    <property type="entry name" value="P-CP_red_C"/>
</dbReference>
<dbReference type="InterPro" id="IPR005969">
    <property type="entry name" value="Protochl_reductB"/>
</dbReference>
<dbReference type="InterPro" id="IPR016209">
    <property type="entry name" value="Protochlorophyllide_Rdtase"/>
</dbReference>
<dbReference type="NCBIfam" id="TIGR01278">
    <property type="entry name" value="DPOR_BchB"/>
    <property type="match status" value="1"/>
</dbReference>
<dbReference type="NCBIfam" id="NF002789">
    <property type="entry name" value="PRK02910.1-3"/>
    <property type="match status" value="1"/>
</dbReference>
<dbReference type="PANTHER" id="PTHR33712">
    <property type="entry name" value="LIGHT-INDEPENDENT PROTOCHLOROPHYLLIDE REDUCTASE SUBUNIT B"/>
    <property type="match status" value="1"/>
</dbReference>
<dbReference type="PANTHER" id="PTHR33712:SF7">
    <property type="entry name" value="LIGHT-INDEPENDENT PROTOCHLOROPHYLLIDE REDUCTASE SUBUNIT B"/>
    <property type="match status" value="1"/>
</dbReference>
<dbReference type="Pfam" id="PF00148">
    <property type="entry name" value="Oxidored_nitro"/>
    <property type="match status" value="1"/>
</dbReference>
<dbReference type="Pfam" id="PF08369">
    <property type="entry name" value="PCP_red"/>
    <property type="match status" value="1"/>
</dbReference>
<dbReference type="PIRSF" id="PIRSF000163">
    <property type="entry name" value="PCP_ChlB"/>
    <property type="match status" value="1"/>
</dbReference>
<dbReference type="SUPFAM" id="SSF53807">
    <property type="entry name" value="Helical backbone' metal receptor"/>
    <property type="match status" value="1"/>
</dbReference>
<accession>B3QZE2</accession>
<protein>
    <recommendedName>
        <fullName evidence="1">Light-independent protochlorophyllide reductase subunit B</fullName>
        <shortName evidence="1">DPOR subunit B</shortName>
        <shortName evidence="1">LI-POR subunit B</shortName>
        <ecNumber evidence="1">1.3.7.7</ecNumber>
    </recommendedName>
</protein>
<reference key="1">
    <citation type="submission" date="2008-06" db="EMBL/GenBank/DDBJ databases">
        <title>Complete sequence of Chloroherpeton thalassium ATCC 35110.</title>
        <authorList>
            <consortium name="US DOE Joint Genome Institute"/>
            <person name="Lucas S."/>
            <person name="Copeland A."/>
            <person name="Lapidus A."/>
            <person name="Glavina del Rio T."/>
            <person name="Dalin E."/>
            <person name="Tice H."/>
            <person name="Bruce D."/>
            <person name="Goodwin L."/>
            <person name="Pitluck S."/>
            <person name="Schmutz J."/>
            <person name="Larimer F."/>
            <person name="Land M."/>
            <person name="Hauser L."/>
            <person name="Kyrpides N."/>
            <person name="Mikhailova N."/>
            <person name="Liu Z."/>
            <person name="Li T."/>
            <person name="Zhao F."/>
            <person name="Overmann J."/>
            <person name="Bryant D.A."/>
            <person name="Richardson P."/>
        </authorList>
    </citation>
    <scope>NUCLEOTIDE SEQUENCE [LARGE SCALE GENOMIC DNA]</scope>
    <source>
        <strain>ATCC 35110 / GB-78</strain>
    </source>
</reference>
<feature type="chain" id="PRO_1000120526" description="Light-independent protochlorophyllide reductase subunit B">
    <location>
        <begin position="1"/>
        <end position="537"/>
    </location>
</feature>
<feature type="region of interest" description="Disordered" evidence="2">
    <location>
        <begin position="459"/>
        <end position="483"/>
    </location>
</feature>
<feature type="active site" description="Proton donor" evidence="1">
    <location>
        <position position="292"/>
    </location>
</feature>
<feature type="binding site" evidence="1">
    <location>
        <position position="36"/>
    </location>
    <ligand>
        <name>[4Fe-4S] cluster</name>
        <dbReference type="ChEBI" id="CHEBI:49883"/>
        <note>ligand shared with heterodimeric partner</note>
    </ligand>
</feature>
<feature type="binding site" evidence="1">
    <location>
        <begin position="428"/>
        <end position="429"/>
    </location>
    <ligand>
        <name>substrate</name>
    </ligand>
</feature>
<keyword id="KW-0004">4Fe-4S</keyword>
<keyword id="KW-0067">ATP-binding</keyword>
<keyword id="KW-0077">Bacteriochlorophyll biosynthesis</keyword>
<keyword id="KW-0149">Chlorophyll biosynthesis</keyword>
<keyword id="KW-0408">Iron</keyword>
<keyword id="KW-0411">Iron-sulfur</keyword>
<keyword id="KW-0479">Metal-binding</keyword>
<keyword id="KW-0547">Nucleotide-binding</keyword>
<keyword id="KW-0560">Oxidoreductase</keyword>
<keyword id="KW-0602">Photosynthesis</keyword>
<keyword id="KW-1185">Reference proteome</keyword>
<name>BCHB_CHLT3</name>
<evidence type="ECO:0000255" key="1">
    <source>
        <dbReference type="HAMAP-Rule" id="MF_00353"/>
    </source>
</evidence>
<evidence type="ECO:0000256" key="2">
    <source>
        <dbReference type="SAM" id="MobiDB-lite"/>
    </source>
</evidence>
<sequence length="537" mass="58855">MRLAYWIYEGTAHHGIGRIANSLKGVHAVFHAPLGDDYVNVIHTMLERTPNFPRATTSVVTGRDLAQGTNRLPDTLRQVEERFKPELIIVSASCSTTLLQENLQLIVGNANIDTEVFIYEVNPFRVQETEAAEGLFTALVKKYAEKQDLTEEPSINIIGPASLGFHVRSDVTSLRRMMATLGVKINVVAPYSAGLADLKKLPAAWLNVVPYQELGHGAAEHLEEKFGMSSMYDTPLGIQPTMKWLNELIEKLNAIGAKNGKSSNLKMPPLTAFSFDGMSAPSGVPWFTHSADMESFSMKRAFVFGDATRTVAMVKFLRDELGMEICGAGTYLHKHAAWVREQLAGYLPDDLIVTEEFQEIAKRIEADMPDLVCGTQMERHSCRKVDVPCMVTSAPTHIENHLLGYYPMLGFDGADVIADRVYTTSKLGLEKHLIDFFGDAGLEYEEEQQEKVAEPALATAGETAGQATEAATAPATPGAPLTGEPVWAADGEAMLKKIPFFVRKKAKLNTETFAKENGYATITAEVVRLTKESLGGG</sequence>
<comment type="function">
    <text evidence="1">Component of the dark-operative protochlorophyllide reductase (DPOR) that uses Mg-ATP and reduced ferredoxin to reduce ring D of protochlorophyllide (Pchlide) to form chlorophyllide a (Chlide). This reaction is light-independent. The NB-protein (BchN-BchB) is the catalytic component of the complex.</text>
</comment>
<comment type="catalytic activity">
    <reaction evidence="1">
        <text>chlorophyllide a + oxidized 2[4Fe-4S]-[ferredoxin] + 2 ADP + 2 phosphate = protochlorophyllide a + reduced 2[4Fe-4S]-[ferredoxin] + 2 ATP + 2 H2O</text>
        <dbReference type="Rhea" id="RHEA:28202"/>
        <dbReference type="Rhea" id="RHEA-COMP:10002"/>
        <dbReference type="Rhea" id="RHEA-COMP:10004"/>
        <dbReference type="ChEBI" id="CHEBI:15377"/>
        <dbReference type="ChEBI" id="CHEBI:30616"/>
        <dbReference type="ChEBI" id="CHEBI:33722"/>
        <dbReference type="ChEBI" id="CHEBI:33723"/>
        <dbReference type="ChEBI" id="CHEBI:43474"/>
        <dbReference type="ChEBI" id="CHEBI:83348"/>
        <dbReference type="ChEBI" id="CHEBI:83350"/>
        <dbReference type="ChEBI" id="CHEBI:456216"/>
        <dbReference type="EC" id="1.3.7.7"/>
    </reaction>
</comment>
<comment type="cofactor">
    <cofactor evidence="1">
        <name>[4Fe-4S] cluster</name>
        <dbReference type="ChEBI" id="CHEBI:49883"/>
    </cofactor>
    <text evidence="1">Binds 1 [4Fe-4S] cluster per heterodimer. The cluster is bound at the heterodimer interface by residues from both subunits.</text>
</comment>
<comment type="pathway">
    <text evidence="1">Porphyrin-containing compound metabolism; bacteriochlorophyll biosynthesis (light-independent).</text>
</comment>
<comment type="subunit">
    <text evidence="1">Protochlorophyllide reductase is composed of three subunits; BchL, BchN and BchB. Forms a heterotetramer of two BchB and two BchN subunits.</text>
</comment>
<comment type="similarity">
    <text evidence="1">Belongs to the ChlB/BchB/BchZ family.</text>
</comment>